<feature type="chain" id="PRO_0000071458" description="Serine/threonine-protein phosphatase 2A 56 kDa regulatory subunit gamma isoform">
    <location>
        <begin position="1"/>
        <end position="524"/>
    </location>
</feature>
<feature type="region of interest" description="Disordered" evidence="3">
    <location>
        <begin position="476"/>
        <end position="508"/>
    </location>
</feature>
<feature type="modified residue" description="N-acetylmethionine" evidence="2">
    <location>
        <position position="1"/>
    </location>
</feature>
<feature type="splice variant" id="VSP_014718" description="In isoform 3." evidence="5">
    <location>
        <begin position="442"/>
        <end position="480"/>
    </location>
</feature>
<feature type="splice variant" id="VSP_014719" description="In isoform 1." evidence="7 8 9">
    <original>YAVYSQASAV</original>
    <variation>VLKKRVTREC</variation>
    <location>
        <begin position="443"/>
        <end position="452"/>
    </location>
</feature>
<feature type="splice variant" id="VSP_014720" description="In isoform 1." evidence="7 8 9">
    <location>
        <begin position="453"/>
        <end position="524"/>
    </location>
</feature>
<feature type="splice variant" id="VSP_038641" description="In isoform 4." evidence="6">
    <original>AQKELKKDRPLVRRK</original>
    <variation>LVGRKAMTATQVRKV</variation>
    <location>
        <begin position="482"/>
        <end position="496"/>
    </location>
</feature>
<feature type="splice variant" id="VSP_038642" description="In isoform 4." evidence="6">
    <location>
        <begin position="497"/>
        <end position="524"/>
    </location>
</feature>
<feature type="sequence conflict" description="In Ref. 2; BAB32447/BAB32448." evidence="10" ref="2">
    <original>SSN</original>
    <variation>APT</variation>
    <location>
        <begin position="17"/>
        <end position="19"/>
    </location>
</feature>
<feature type="sequence conflict" description="In Ref. 4; AAB70857." evidence="10" ref="4">
    <original>D</original>
    <variation>N</variation>
    <location>
        <position position="32"/>
    </location>
</feature>
<feature type="sequence conflict" description="In Ref. 3 and 4." evidence="10" ref="3 4">
    <original>A</original>
    <variation>S</variation>
    <location>
        <position position="72"/>
    </location>
</feature>
<sequence length="524" mass="60824">MLTCNKAGSGMVVDAASSNGPFQPVALLHIRDVPPADQEKLFIQKLRQCCVLFDFVSDPLSDLKWKEVKRAALSEMVEYITHNRNVITEPIYPEAVHMFAVNMFRTLPPSSNPTGAEFDPEEDEPTLEAAWPHLQLVYEFFLRFLESPDFQPNIAKKYIDQKFVLQLLELFDSEDPRERDFLKTTLHRIYGKFLGLRAYIRKQINNIFYRFIYETEHHNGIAELLEILGSIINGFALPLKEEHKIFLLKVLLPLHKVKSLSVYHPQLAYCVVQFLEKDSTLTEPVVMALLKYWPKTHSPKEVMFLNELEEILDVIEPSEFVKIMEPLFRQLAKCVSSPHFQVAERALYYWNNEYIMSLISDNAAKILPIMFPSLYRNSKTHWNKTIHGLIYNALKLFMEMNQKLFDDCTQQFKAEKLKEKLKMKEREEAWVKIENLAKANPQYAVYSQASAVSIPVAMETDGPQFEDVQMLKKTVSDEARQAQKELKKDRPLVRRKSELPQDPHTEKALEAHCRASELLSQDGR</sequence>
<dbReference type="EMBL" id="BC003979">
    <property type="protein sequence ID" value="AAH03979.1"/>
    <property type="molecule type" value="mRNA"/>
</dbReference>
<dbReference type="EMBL" id="AB055635">
    <property type="protein sequence ID" value="BAB32447.1"/>
    <property type="molecule type" value="mRNA"/>
</dbReference>
<dbReference type="EMBL" id="AB055636">
    <property type="protein sequence ID" value="BAB32448.1"/>
    <property type="molecule type" value="mRNA"/>
</dbReference>
<dbReference type="EMBL" id="U37353">
    <property type="protein sequence ID" value="AAC52435.1"/>
    <property type="molecule type" value="mRNA"/>
</dbReference>
<dbReference type="EMBL" id="U59418">
    <property type="protein sequence ID" value="AAB70857.1"/>
    <property type="molecule type" value="mRNA"/>
</dbReference>
<dbReference type="EMBL" id="AY389498">
    <property type="protein sequence ID" value="AAR26474.1"/>
    <property type="molecule type" value="mRNA"/>
</dbReference>
<dbReference type="CCDS" id="CCDS36557.1">
    <molecule id="Q60996-1"/>
</dbReference>
<dbReference type="CCDS" id="CCDS36558.1">
    <molecule id="Q60996-3"/>
</dbReference>
<dbReference type="CCDS" id="CCDS88403.1">
    <molecule id="Q60996-4"/>
</dbReference>
<dbReference type="CCDS" id="CCDS88404.1">
    <molecule id="Q60996-2"/>
</dbReference>
<dbReference type="RefSeq" id="NP_001074926.1">
    <molecule id="Q60996-3"/>
    <property type="nucleotide sequence ID" value="NM_001081457.3"/>
</dbReference>
<dbReference type="RefSeq" id="NP_001074927.1">
    <molecule id="Q60996-2"/>
    <property type="nucleotide sequence ID" value="NM_001081458.3"/>
</dbReference>
<dbReference type="RefSeq" id="NP_001351135.1">
    <molecule id="Q60996-4"/>
    <property type="nucleotide sequence ID" value="NM_001364206.1"/>
</dbReference>
<dbReference type="RefSeq" id="NP_036153.2">
    <molecule id="Q60996-1"/>
    <property type="nucleotide sequence ID" value="NM_012023.4"/>
</dbReference>
<dbReference type="RefSeq" id="XP_017170571.1">
    <property type="nucleotide sequence ID" value="XM_017315082.1"/>
</dbReference>
<dbReference type="SMR" id="Q60996"/>
<dbReference type="BioGRID" id="205070">
    <property type="interactions" value="21"/>
</dbReference>
<dbReference type="DIP" id="DIP-24181N"/>
<dbReference type="FunCoup" id="Q60996">
    <property type="interactions" value="5484"/>
</dbReference>
<dbReference type="IntAct" id="Q60996">
    <property type="interactions" value="6"/>
</dbReference>
<dbReference type="MINT" id="Q60996"/>
<dbReference type="STRING" id="10090.ENSMUSP00000082053"/>
<dbReference type="GlyGen" id="Q60996">
    <property type="glycosylation" value="1 site, 1 O-linked glycan (1 site)"/>
</dbReference>
<dbReference type="iPTMnet" id="Q60996"/>
<dbReference type="PhosphoSitePlus" id="Q60996"/>
<dbReference type="SwissPalm" id="Q60996"/>
<dbReference type="jPOST" id="Q60996"/>
<dbReference type="PaxDb" id="10090-ENSMUSP00000082053"/>
<dbReference type="PeptideAtlas" id="Q60996"/>
<dbReference type="ProteomicsDB" id="285984">
    <molecule id="Q60996-1"/>
</dbReference>
<dbReference type="ProteomicsDB" id="285985">
    <molecule id="Q60996-2"/>
</dbReference>
<dbReference type="ProteomicsDB" id="285986">
    <molecule id="Q60996-3"/>
</dbReference>
<dbReference type="ProteomicsDB" id="285987">
    <molecule id="Q60996-4"/>
</dbReference>
<dbReference type="Pumba" id="Q60996"/>
<dbReference type="Antibodypedia" id="27667">
    <property type="antibodies" value="251 antibodies from 29 providers"/>
</dbReference>
<dbReference type="DNASU" id="26931"/>
<dbReference type="Ensembl" id="ENSMUST00000084985.11">
    <molecule id="Q60996-1"/>
    <property type="protein sequence ID" value="ENSMUSP00000082053.4"/>
    <property type="gene ID" value="ENSMUSG00000017843.15"/>
</dbReference>
<dbReference type="Ensembl" id="ENSMUST00000109832.3">
    <molecule id="Q60996-3"/>
    <property type="protein sequence ID" value="ENSMUSP00000105458.2"/>
    <property type="gene ID" value="ENSMUSG00000017843.15"/>
</dbReference>
<dbReference type="Ensembl" id="ENSMUST00000221074.2">
    <molecule id="Q60996-4"/>
    <property type="protein sequence ID" value="ENSMUSP00000152282.2"/>
    <property type="gene ID" value="ENSMUSG00000017843.15"/>
</dbReference>
<dbReference type="Ensembl" id="ENSMUST00000221715.2">
    <molecule id="Q60996-2"/>
    <property type="protein sequence ID" value="ENSMUSP00000152865.2"/>
    <property type="gene ID" value="ENSMUSG00000017843.15"/>
</dbReference>
<dbReference type="GeneID" id="26931"/>
<dbReference type="KEGG" id="mmu:26931"/>
<dbReference type="UCSC" id="uc007pbk.1">
    <molecule id="Q60996-2"/>
    <property type="organism name" value="mouse"/>
</dbReference>
<dbReference type="UCSC" id="uc007pbl.2">
    <molecule id="Q60996-1"/>
    <property type="organism name" value="mouse"/>
</dbReference>
<dbReference type="UCSC" id="uc007pbm.2">
    <molecule id="Q60996-3"/>
    <property type="organism name" value="mouse"/>
</dbReference>
<dbReference type="AGR" id="MGI:1349475"/>
<dbReference type="CTD" id="5527"/>
<dbReference type="MGI" id="MGI:1349475">
    <property type="gene designation" value="Ppp2r5c"/>
</dbReference>
<dbReference type="VEuPathDB" id="HostDB:ENSMUSG00000017843"/>
<dbReference type="eggNOG" id="KOG2085">
    <property type="taxonomic scope" value="Eukaryota"/>
</dbReference>
<dbReference type="GeneTree" id="ENSGT01030000234620"/>
<dbReference type="HOGENOM" id="CLU_012437_3_2_1"/>
<dbReference type="InParanoid" id="Q60996"/>
<dbReference type="OMA" id="PHDPNTD"/>
<dbReference type="OrthoDB" id="10264446at2759"/>
<dbReference type="PhylomeDB" id="Q60996"/>
<dbReference type="TreeFam" id="TF105556"/>
<dbReference type="Reactome" id="R-MMU-141444">
    <property type="pathway name" value="Amplification of signal from unattached kinetochores via a MAD2 inhibitory signal"/>
</dbReference>
<dbReference type="Reactome" id="R-MMU-195253">
    <property type="pathway name" value="Degradation of beta-catenin by the destruction complex"/>
</dbReference>
<dbReference type="Reactome" id="R-MMU-196299">
    <property type="pathway name" value="Beta-catenin phosphorylation cascade"/>
</dbReference>
<dbReference type="Reactome" id="R-MMU-2467813">
    <property type="pathway name" value="Separation of Sister Chromatids"/>
</dbReference>
<dbReference type="Reactome" id="R-MMU-2500257">
    <property type="pathway name" value="Resolution of Sister Chromatid Cohesion"/>
</dbReference>
<dbReference type="Reactome" id="R-MMU-389356">
    <property type="pathway name" value="Co-stimulation by CD28"/>
</dbReference>
<dbReference type="Reactome" id="R-MMU-389513">
    <property type="pathway name" value="Co-inhibition by CTLA4"/>
</dbReference>
<dbReference type="Reactome" id="R-MMU-432142">
    <property type="pathway name" value="Platelet sensitization by LDL"/>
</dbReference>
<dbReference type="Reactome" id="R-MMU-4641262">
    <property type="pathway name" value="Disassembly of the destruction complex and recruitment of AXIN to the membrane"/>
</dbReference>
<dbReference type="Reactome" id="R-MMU-5663220">
    <property type="pathway name" value="RHO GTPases Activate Formins"/>
</dbReference>
<dbReference type="Reactome" id="R-MMU-5673000">
    <property type="pathway name" value="RAF activation"/>
</dbReference>
<dbReference type="Reactome" id="R-MMU-5675221">
    <property type="pathway name" value="Negative regulation of MAPK pathway"/>
</dbReference>
<dbReference type="Reactome" id="R-MMU-6804757">
    <property type="pathway name" value="Regulation of TP53 Degradation"/>
</dbReference>
<dbReference type="Reactome" id="R-MMU-6811558">
    <property type="pathway name" value="PI5P, PP2A and IER3 Regulate PI3K/AKT Signaling"/>
</dbReference>
<dbReference type="Reactome" id="R-MMU-68877">
    <property type="pathway name" value="Mitotic Prometaphase"/>
</dbReference>
<dbReference type="Reactome" id="R-MMU-9648025">
    <property type="pathway name" value="EML4 and NUDC in mitotic spindle formation"/>
</dbReference>
<dbReference type="BioGRID-ORCS" id="26931">
    <property type="hits" value="3 hits in 77 CRISPR screens"/>
</dbReference>
<dbReference type="ChiTaRS" id="Ppp2r5c">
    <property type="organism name" value="mouse"/>
</dbReference>
<dbReference type="PRO" id="PR:Q60996"/>
<dbReference type="Proteomes" id="UP000000589">
    <property type="component" value="Chromosome 12"/>
</dbReference>
<dbReference type="RNAct" id="Q60996">
    <property type="molecule type" value="protein"/>
</dbReference>
<dbReference type="Bgee" id="ENSMUSG00000017843">
    <property type="expression patterns" value="Expressed in retinal neural layer and 265 other cell types or tissues"/>
</dbReference>
<dbReference type="ExpressionAtlas" id="Q60996">
    <property type="expression patterns" value="baseline and differential"/>
</dbReference>
<dbReference type="GO" id="GO:0000775">
    <property type="term" value="C:chromosome, centromeric region"/>
    <property type="evidence" value="ECO:0000250"/>
    <property type="project" value="UniProtKB"/>
</dbReference>
<dbReference type="GO" id="GO:0005634">
    <property type="term" value="C:nucleus"/>
    <property type="evidence" value="ECO:0000304"/>
    <property type="project" value="MGI"/>
</dbReference>
<dbReference type="GO" id="GO:0000159">
    <property type="term" value="C:protein phosphatase type 2A complex"/>
    <property type="evidence" value="ECO:0000250"/>
    <property type="project" value="UniProtKB"/>
</dbReference>
<dbReference type="GO" id="GO:0019888">
    <property type="term" value="F:protein phosphatase regulator activity"/>
    <property type="evidence" value="ECO:0007669"/>
    <property type="project" value="InterPro"/>
</dbReference>
<dbReference type="GO" id="GO:0043161">
    <property type="term" value="P:proteasome-mediated ubiquitin-dependent protein catabolic process"/>
    <property type="evidence" value="ECO:0000266"/>
    <property type="project" value="MGI"/>
</dbReference>
<dbReference type="GO" id="GO:0007165">
    <property type="term" value="P:signal transduction"/>
    <property type="evidence" value="ECO:0007669"/>
    <property type="project" value="InterPro"/>
</dbReference>
<dbReference type="FunFam" id="1.25.10.10:FF:000003">
    <property type="entry name" value="Serine/threonine-protein phosphatase 2A 56 kDa regulatory subunit"/>
    <property type="match status" value="1"/>
</dbReference>
<dbReference type="Gene3D" id="1.25.10.10">
    <property type="entry name" value="Leucine-rich Repeat Variant"/>
    <property type="match status" value="1"/>
</dbReference>
<dbReference type="InterPro" id="IPR011989">
    <property type="entry name" value="ARM-like"/>
</dbReference>
<dbReference type="InterPro" id="IPR016024">
    <property type="entry name" value="ARM-type_fold"/>
</dbReference>
<dbReference type="InterPro" id="IPR002554">
    <property type="entry name" value="PP2A_B56"/>
</dbReference>
<dbReference type="PANTHER" id="PTHR10257">
    <property type="entry name" value="SERINE/THREONINE PROTEIN PHOSPHATASE 2A PP2A REGULATORY SUBUNIT B"/>
    <property type="match status" value="1"/>
</dbReference>
<dbReference type="PANTHER" id="PTHR10257:SF3">
    <property type="entry name" value="SERINE_THREONINE-PROTEIN PHOSPHATASE 2A 56 KDA REGULATORY SUBUNIT GAMMA ISOFORM"/>
    <property type="match status" value="1"/>
</dbReference>
<dbReference type="Pfam" id="PF01603">
    <property type="entry name" value="B56"/>
    <property type="match status" value="1"/>
</dbReference>
<dbReference type="PIRSF" id="PIRSF028043">
    <property type="entry name" value="PP2A_B56"/>
    <property type="match status" value="1"/>
</dbReference>
<dbReference type="SUPFAM" id="SSF48371">
    <property type="entry name" value="ARM repeat"/>
    <property type="match status" value="1"/>
</dbReference>
<name>2A5G_MOUSE</name>
<proteinExistence type="evidence at protein level"/>
<gene>
    <name type="primary">Ppp2r5c</name>
</gene>
<organism>
    <name type="scientific">Mus musculus</name>
    <name type="common">Mouse</name>
    <dbReference type="NCBI Taxonomy" id="10090"/>
    <lineage>
        <taxon>Eukaryota</taxon>
        <taxon>Metazoa</taxon>
        <taxon>Chordata</taxon>
        <taxon>Craniata</taxon>
        <taxon>Vertebrata</taxon>
        <taxon>Euteleostomi</taxon>
        <taxon>Mammalia</taxon>
        <taxon>Eutheria</taxon>
        <taxon>Euarchontoglires</taxon>
        <taxon>Glires</taxon>
        <taxon>Rodentia</taxon>
        <taxon>Myomorpha</taxon>
        <taxon>Muroidea</taxon>
        <taxon>Muridae</taxon>
        <taxon>Murinae</taxon>
        <taxon>Mus</taxon>
        <taxon>Mus</taxon>
    </lineage>
</organism>
<comment type="function">
    <text evidence="1">The B regulatory subunit might modulate substrate selectivity and catalytic activity, and might also direct the localization of the catalytic enzyme to a particular subcellular compartment. The PP2A-PPP2R5C holoenzyme may activate TP53 and play a role in DNA damage-induced inhibition of cell proliferation. PP2A-PPP2R5C may also regulate the ERK signaling pathway through ERK dephosphorylation (By similarity).</text>
</comment>
<comment type="subunit">
    <text evidence="2">PP2A consists of a common heterodimeric core enzyme, composed of PPP2CA a 36 kDa catalytic subunit (subunit C) and PPP2R1A a 65 kDa constant regulatory subunit (PR65 or subunit A), that associates with a variety of regulatory subunits. Proteins that associate with the core dimer include three families of regulatory subunits B (the R2/B/PR55/B55, R3/B''/PR72/PR130/PR59 and R5/B'/B56 families), the 48 kDa variable regulatory subunit, viral proteins, and cell signaling molecules. Interacts with SGO1 (By similarity). Interacts with SGO1; the interaction is direct. May interact with TP53 (By similarity). Interacts with IER3 and/or ERK kinases; regulates ERK dephosphorylation (By similarity). Interacts with CIP2A; this interaction stabilizes CIP2A (By similarity).</text>
</comment>
<comment type="interaction">
    <interactant intactId="EBI-1369292">
        <id>Q60996-3</id>
    </interactant>
    <interactant intactId="EBI-302388">
        <id>P30153</id>
        <label>PPP2R1A</label>
    </interactant>
    <organismsDiffer>true</organismsDiffer>
    <experiments>2</experiments>
</comment>
<comment type="subcellular location">
    <subcellularLocation>
        <location evidence="1">Nucleus</location>
    </subcellularLocation>
    <subcellularLocation>
        <location evidence="1">Chromosome</location>
        <location evidence="1">Centromere</location>
    </subcellularLocation>
</comment>
<comment type="alternative products">
    <event type="alternative splicing"/>
    <isoform>
        <id>Q60996-1</id>
        <name>2</name>
        <name>Gamma-2</name>
        <sequence type="displayed"/>
    </isoform>
    <isoform>
        <id>Q60996-2</id>
        <name>1</name>
        <name>Gamma-1</name>
        <sequence type="described" ref="VSP_014719 VSP_014720"/>
    </isoform>
    <isoform>
        <id>Q60996-3</id>
        <name>3</name>
        <name>Gamma-3</name>
        <sequence type="described" ref="VSP_014718"/>
    </isoform>
    <isoform>
        <id>Q60996-4</id>
        <name>4</name>
        <name>Gamma-4</name>
        <sequence type="described" ref="VSP_038641 VSP_038642"/>
    </isoform>
</comment>
<comment type="tissue specificity">
    <text evidence="4">Highest levels in heart, liver and brain. Lower levels in skeletal muscle, spleen, kidney and lung. Isoform 4 is testis-specific.</text>
</comment>
<comment type="similarity">
    <text evidence="10">Belongs to the phosphatase 2A regulatory subunit B56 family.</text>
</comment>
<accession>Q60996</accession>
<accession>O35708</accession>
<accession>Q6TQF7</accession>
<accession>Q99KW8</accession>
<accession>Q99N67</accession>
<accession>Q99N68</accession>
<reference key="1">
    <citation type="journal article" date="2004" name="Genome Res.">
        <title>The status, quality, and expansion of the NIH full-length cDNA project: the Mammalian Gene Collection (MGC).</title>
        <authorList>
            <consortium name="The MGC Project Team"/>
        </authorList>
    </citation>
    <scope>NUCLEOTIDE SEQUENCE [LARGE SCALE MRNA] (ISOFORM 1)</scope>
    <source>
        <strain>FVB/N</strain>
        <tissue>Mammary tumor</tissue>
    </source>
</reference>
<reference key="2">
    <citation type="journal article" date="2003" name="Am. J. Pathol.">
        <title>A truncated isoform of the protein phosphatase 2A B56gamma regulatory subunit may promote genetic instability and cause tumor progression.</title>
        <authorList>
            <person name="Ito A."/>
            <person name="Koma Y."/>
            <person name="Watabe K."/>
            <person name="Nagano T."/>
            <person name="Endo Y."/>
            <person name="Nojima H."/>
            <person name="Kitamura Y."/>
        </authorList>
    </citation>
    <scope>NUCLEOTIDE SEQUENCE [MRNA] OF 11-524 (ISOFORMS 2 AND 3)</scope>
</reference>
<reference key="3">
    <citation type="journal article" date="1996" name="J. Biol. Chem.">
        <title>Identification of a novel protein phosphatase 2A regulatory subunit highly expressed in muscle.</title>
        <authorList>
            <person name="Tehrani M.A."/>
            <person name="Mumby M.C."/>
            <person name="Kamibayashi C."/>
        </authorList>
    </citation>
    <scope>NUCLEOTIDE SEQUENCE [MRNA] OF 18-524 (ISOFORM 1)</scope>
    <source>
        <tissue>T-cell</tissue>
    </source>
</reference>
<reference key="4">
    <citation type="journal article" date="1996" name="Cancer Res.">
        <title>Identification by differential display of annexin-VI, a gene differentially expressed during melanoma progression.</title>
        <authorList>
            <person name="Francia G."/>
            <person name="Mitchell S.D."/>
            <person name="Moss S.E."/>
            <person name="Hanby A.M."/>
            <person name="Marshall J.F."/>
            <person name="Hart I.R."/>
        </authorList>
    </citation>
    <scope>NUCLEOTIDE SEQUENCE [MRNA] OF 32-524 (ISOFORM 1)</scope>
    <source>
        <strain>C57BL/6J</strain>
    </source>
</reference>
<reference key="5">
    <citation type="journal article" date="2003" name="Cytogenet. Genome Res.">
        <title>Expression of the B56delta subunit of protein phosphatase 2A and Mea1 in mouse spermatogenesis. Identification of a new B56gamma subunit (B56gamma4) specifically expressed in testis.</title>
        <authorList>
            <person name="Ortega-Lazaro J.C."/>
            <person name="del Mazo J."/>
        </authorList>
    </citation>
    <scope>NUCLEOTIDE SEQUENCE [MRNA] OF 326-524 (ISOFORM 4)</scope>
    <scope>TISSUE SPECIFICITY</scope>
    <source>
        <strain>CD-1</strain>
        <tissue>Testis</tissue>
    </source>
</reference>
<reference key="6">
    <citation type="journal article" date="2010" name="Cell">
        <title>A tissue-specific atlas of mouse protein phosphorylation and expression.</title>
        <authorList>
            <person name="Huttlin E.L."/>
            <person name="Jedrychowski M.P."/>
            <person name="Elias J.E."/>
            <person name="Goswami T."/>
            <person name="Rad R."/>
            <person name="Beausoleil S.A."/>
            <person name="Villen J."/>
            <person name="Haas W."/>
            <person name="Sowa M.E."/>
            <person name="Gygi S.P."/>
        </authorList>
    </citation>
    <scope>IDENTIFICATION BY MASS SPECTROMETRY [LARGE SCALE ANALYSIS]</scope>
    <source>
        <tissue>Spleen</tissue>
        <tissue>Testis</tissue>
    </source>
</reference>
<protein>
    <recommendedName>
        <fullName>Serine/threonine-protein phosphatase 2A 56 kDa regulatory subunit gamma isoform</fullName>
    </recommendedName>
    <alternativeName>
        <fullName>PP2A B subunit isoform B'-alpha-3</fullName>
    </alternativeName>
    <alternativeName>
        <fullName>PP2A B subunit isoform B'-gamma</fullName>
    </alternativeName>
    <alternativeName>
        <fullName>PP2A B subunit isoform B56-gamma</fullName>
    </alternativeName>
    <alternativeName>
        <fullName>PP2A B subunit isoform PR61-gamma</fullName>
    </alternativeName>
    <alternativeName>
        <fullName>PP2A B subunit isoform R5-gamma</fullName>
    </alternativeName>
</protein>
<keyword id="KW-0007">Acetylation</keyword>
<keyword id="KW-0025">Alternative splicing</keyword>
<keyword id="KW-0137">Centromere</keyword>
<keyword id="KW-0158">Chromosome</keyword>
<keyword id="KW-0539">Nucleus</keyword>
<keyword id="KW-1185">Reference proteome</keyword>
<evidence type="ECO:0000250" key="1"/>
<evidence type="ECO:0000250" key="2">
    <source>
        <dbReference type="UniProtKB" id="Q13362"/>
    </source>
</evidence>
<evidence type="ECO:0000256" key="3">
    <source>
        <dbReference type="SAM" id="MobiDB-lite"/>
    </source>
</evidence>
<evidence type="ECO:0000269" key="4">
    <source>
    </source>
</evidence>
<evidence type="ECO:0000303" key="5">
    <source>
    </source>
</evidence>
<evidence type="ECO:0000303" key="6">
    <source>
    </source>
</evidence>
<evidence type="ECO:0000303" key="7">
    <source>
    </source>
</evidence>
<evidence type="ECO:0000303" key="8">
    <source>
    </source>
</evidence>
<evidence type="ECO:0000303" key="9">
    <source>
    </source>
</evidence>
<evidence type="ECO:0000305" key="10"/>